<protein>
    <recommendedName>
        <fullName>Ras-like GTP-binding protein RHO</fullName>
    </recommendedName>
</protein>
<dbReference type="EMBL" id="M10078">
    <property type="protein sequence ID" value="AAA27776.1"/>
    <property type="molecule type" value="mRNA"/>
</dbReference>
<dbReference type="PIR" id="A01373">
    <property type="entry name" value="TVGAAC"/>
</dbReference>
<dbReference type="RefSeq" id="NP_001191481.1">
    <property type="nucleotide sequence ID" value="NM_001204552.1"/>
</dbReference>
<dbReference type="SMR" id="P01122"/>
<dbReference type="EnsemblMetazoa" id="NM_001204552.1">
    <property type="protein sequence ID" value="NP_001191481.1"/>
    <property type="gene ID" value="GeneID_100533240"/>
</dbReference>
<dbReference type="GeneID" id="100533240"/>
<dbReference type="CTD" id="6010"/>
<dbReference type="OrthoDB" id="8830751at2759"/>
<dbReference type="Proteomes" id="UP000694888">
    <property type="component" value="Unplaced"/>
</dbReference>
<dbReference type="GO" id="GO:0005886">
    <property type="term" value="C:plasma membrane"/>
    <property type="evidence" value="ECO:0007669"/>
    <property type="project" value="UniProtKB-SubCell"/>
</dbReference>
<dbReference type="GO" id="GO:0005525">
    <property type="term" value="F:GTP binding"/>
    <property type="evidence" value="ECO:0007669"/>
    <property type="project" value="UniProtKB-KW"/>
</dbReference>
<dbReference type="GO" id="GO:0003924">
    <property type="term" value="F:GTPase activity"/>
    <property type="evidence" value="ECO:0007669"/>
    <property type="project" value="InterPro"/>
</dbReference>
<dbReference type="GO" id="GO:0007264">
    <property type="term" value="P:small GTPase-mediated signal transduction"/>
    <property type="evidence" value="ECO:0007669"/>
    <property type="project" value="InterPro"/>
</dbReference>
<dbReference type="CDD" id="cd01870">
    <property type="entry name" value="RhoA_like"/>
    <property type="match status" value="1"/>
</dbReference>
<dbReference type="FunFam" id="3.40.50.300:FF:000095">
    <property type="entry name" value="Rho-related GTP-binding protein RhoC"/>
    <property type="match status" value="1"/>
</dbReference>
<dbReference type="Gene3D" id="3.40.50.300">
    <property type="entry name" value="P-loop containing nucleotide triphosphate hydrolases"/>
    <property type="match status" value="1"/>
</dbReference>
<dbReference type="InterPro" id="IPR027417">
    <property type="entry name" value="P-loop_NTPase"/>
</dbReference>
<dbReference type="InterPro" id="IPR005225">
    <property type="entry name" value="Small_GTP-bd"/>
</dbReference>
<dbReference type="InterPro" id="IPR001806">
    <property type="entry name" value="Small_GTPase"/>
</dbReference>
<dbReference type="InterPro" id="IPR003578">
    <property type="entry name" value="Small_GTPase_Rho"/>
</dbReference>
<dbReference type="NCBIfam" id="TIGR00231">
    <property type="entry name" value="small_GTP"/>
    <property type="match status" value="1"/>
</dbReference>
<dbReference type="PANTHER" id="PTHR24072">
    <property type="entry name" value="RHO FAMILY GTPASE"/>
    <property type="match status" value="1"/>
</dbReference>
<dbReference type="Pfam" id="PF00071">
    <property type="entry name" value="Ras"/>
    <property type="match status" value="1"/>
</dbReference>
<dbReference type="PRINTS" id="PR00449">
    <property type="entry name" value="RASTRNSFRMNG"/>
</dbReference>
<dbReference type="SMART" id="SM00175">
    <property type="entry name" value="RAB"/>
    <property type="match status" value="1"/>
</dbReference>
<dbReference type="SMART" id="SM00173">
    <property type="entry name" value="RAS"/>
    <property type="match status" value="1"/>
</dbReference>
<dbReference type="SMART" id="SM00174">
    <property type="entry name" value="RHO"/>
    <property type="match status" value="1"/>
</dbReference>
<dbReference type="SUPFAM" id="SSF52540">
    <property type="entry name" value="P-loop containing nucleoside triphosphate hydrolases"/>
    <property type="match status" value="1"/>
</dbReference>
<dbReference type="PROSITE" id="PS51420">
    <property type="entry name" value="RHO"/>
    <property type="match status" value="1"/>
</dbReference>
<proteinExistence type="evidence at transcript level"/>
<organism>
    <name type="scientific">Aplysia californica</name>
    <name type="common">California sea hare</name>
    <dbReference type="NCBI Taxonomy" id="6500"/>
    <lineage>
        <taxon>Eukaryota</taxon>
        <taxon>Metazoa</taxon>
        <taxon>Spiralia</taxon>
        <taxon>Lophotrochozoa</taxon>
        <taxon>Mollusca</taxon>
        <taxon>Gastropoda</taxon>
        <taxon>Heterobranchia</taxon>
        <taxon>Euthyneura</taxon>
        <taxon>Tectipleura</taxon>
        <taxon>Aplysiida</taxon>
        <taxon>Aplysioidea</taxon>
        <taxon>Aplysiidae</taxon>
        <taxon>Aplysia</taxon>
    </lineage>
</organism>
<name>RHO_APLCA</name>
<accession>P01122</accession>
<gene>
    <name type="primary">RHO</name>
</gene>
<feature type="chain" id="PRO_0000198882" description="Ras-like GTP-binding protein RHO">
    <location>
        <begin position="1"/>
        <end position="189"/>
    </location>
</feature>
<feature type="propeptide" id="PRO_0000281235" description="Removed in mature form" evidence="1">
    <location>
        <begin position="190"/>
        <end position="192"/>
    </location>
</feature>
<feature type="short sequence motif" description="Effector region" evidence="2">
    <location>
        <begin position="34"/>
        <end position="42"/>
    </location>
</feature>
<feature type="binding site" evidence="1">
    <location>
        <begin position="12"/>
        <end position="19"/>
    </location>
    <ligand>
        <name>GTP</name>
        <dbReference type="ChEBI" id="CHEBI:37565"/>
    </ligand>
</feature>
<feature type="binding site" evidence="1">
    <location>
        <begin position="59"/>
        <end position="63"/>
    </location>
    <ligand>
        <name>GTP</name>
        <dbReference type="ChEBI" id="CHEBI:37565"/>
    </ligand>
</feature>
<feature type="binding site" evidence="1">
    <location>
        <begin position="117"/>
        <end position="120"/>
    </location>
    <ligand>
        <name>GTP</name>
        <dbReference type="ChEBI" id="CHEBI:37565"/>
    </ligand>
</feature>
<feature type="modified residue" description="Cysteine methyl ester" evidence="1">
    <location>
        <position position="189"/>
    </location>
</feature>
<feature type="lipid moiety-binding region" description="S-geranylgeranyl cysteine" evidence="1">
    <location>
        <position position="189"/>
    </location>
</feature>
<comment type="subcellular location">
    <subcellularLocation>
        <location evidence="3">Cell membrane</location>
        <topology evidence="3">Lipid-anchor</topology>
        <orientation evidence="3">Cytoplasmic side</orientation>
    </subcellularLocation>
</comment>
<comment type="similarity">
    <text evidence="3">Belongs to the small GTPase superfamily. Rho family.</text>
</comment>
<reference key="1">
    <citation type="journal article" date="1985" name="Cell">
        <title>A novel ras-related gene family.</title>
        <authorList>
            <person name="Madaule P."/>
            <person name="Axel R."/>
        </authorList>
    </citation>
    <scope>NUCLEOTIDE SEQUENCE [MRNA]</scope>
</reference>
<evidence type="ECO:0000250" key="1"/>
<evidence type="ECO:0000255" key="2"/>
<evidence type="ECO:0000305" key="3"/>
<sequence>MAAIRKKLVIVGDGACGKTCLLIVFSKDQFPEVYVPTVFENYVADIEVDGKQVELALWDTAGQEDYDRLRPLSYPDTDVILMCFSIDSPDSLENIPEKWTPEVRHFCPNVPIILVGNKKDLRNDESTKRELMKMKQEPVRPEDGRAMAEKINAYSYLECSAKTKEGVRDVFETATRAALQVKKKKKGGCVVL</sequence>
<keyword id="KW-1003">Cell membrane</keyword>
<keyword id="KW-0342">GTP-binding</keyword>
<keyword id="KW-0449">Lipoprotein</keyword>
<keyword id="KW-0472">Membrane</keyword>
<keyword id="KW-0488">Methylation</keyword>
<keyword id="KW-0547">Nucleotide-binding</keyword>
<keyword id="KW-0636">Prenylation</keyword>